<dbReference type="EC" id="6.3.4.16" evidence="1"/>
<dbReference type="EC" id="6.3.5.5" evidence="1"/>
<dbReference type="EMBL" id="CP001056">
    <property type="protein sequence ID" value="ACD24094.1"/>
    <property type="molecule type" value="Genomic_DNA"/>
</dbReference>
<dbReference type="SMR" id="B2THH3"/>
<dbReference type="KEGG" id="cbk:CLL_A0071"/>
<dbReference type="PATRIC" id="fig|935198.13.peg.62"/>
<dbReference type="HOGENOM" id="CLU_000513_1_2_9"/>
<dbReference type="UniPathway" id="UPA00068">
    <property type="reaction ID" value="UER00171"/>
</dbReference>
<dbReference type="UniPathway" id="UPA00070">
    <property type="reaction ID" value="UER00115"/>
</dbReference>
<dbReference type="Proteomes" id="UP000001195">
    <property type="component" value="Chromosome"/>
</dbReference>
<dbReference type="GO" id="GO:0005737">
    <property type="term" value="C:cytoplasm"/>
    <property type="evidence" value="ECO:0007669"/>
    <property type="project" value="TreeGrafter"/>
</dbReference>
<dbReference type="GO" id="GO:0005524">
    <property type="term" value="F:ATP binding"/>
    <property type="evidence" value="ECO:0007669"/>
    <property type="project" value="UniProtKB-UniRule"/>
</dbReference>
<dbReference type="GO" id="GO:0004087">
    <property type="term" value="F:carbamoyl-phosphate synthase (ammonia) activity"/>
    <property type="evidence" value="ECO:0007669"/>
    <property type="project" value="RHEA"/>
</dbReference>
<dbReference type="GO" id="GO:0004088">
    <property type="term" value="F:carbamoyl-phosphate synthase (glutamine-hydrolyzing) activity"/>
    <property type="evidence" value="ECO:0007669"/>
    <property type="project" value="UniProtKB-UniRule"/>
</dbReference>
<dbReference type="GO" id="GO:0046872">
    <property type="term" value="F:metal ion binding"/>
    <property type="evidence" value="ECO:0007669"/>
    <property type="project" value="UniProtKB-KW"/>
</dbReference>
<dbReference type="GO" id="GO:0044205">
    <property type="term" value="P:'de novo' UMP biosynthetic process"/>
    <property type="evidence" value="ECO:0007669"/>
    <property type="project" value="UniProtKB-UniRule"/>
</dbReference>
<dbReference type="GO" id="GO:0006541">
    <property type="term" value="P:glutamine metabolic process"/>
    <property type="evidence" value="ECO:0007669"/>
    <property type="project" value="TreeGrafter"/>
</dbReference>
<dbReference type="GO" id="GO:0006526">
    <property type="term" value="P:L-arginine biosynthetic process"/>
    <property type="evidence" value="ECO:0007669"/>
    <property type="project" value="UniProtKB-UniRule"/>
</dbReference>
<dbReference type="CDD" id="cd01424">
    <property type="entry name" value="MGS_CPS_II"/>
    <property type="match status" value="1"/>
</dbReference>
<dbReference type="FunFam" id="1.10.1030.10:FF:000002">
    <property type="entry name" value="Carbamoyl-phosphate synthase large chain"/>
    <property type="match status" value="1"/>
</dbReference>
<dbReference type="FunFam" id="3.30.470.20:FF:000001">
    <property type="entry name" value="Carbamoyl-phosphate synthase large chain"/>
    <property type="match status" value="1"/>
</dbReference>
<dbReference type="FunFam" id="3.30.470.20:FF:000026">
    <property type="entry name" value="Carbamoyl-phosphate synthase large chain"/>
    <property type="match status" value="1"/>
</dbReference>
<dbReference type="FunFam" id="3.40.50.20:FF:000001">
    <property type="entry name" value="Carbamoyl-phosphate synthase large chain"/>
    <property type="match status" value="1"/>
</dbReference>
<dbReference type="FunFam" id="3.40.50.20:FF:000002">
    <property type="entry name" value="Carbamoyl-phosphate synthase large chain"/>
    <property type="match status" value="1"/>
</dbReference>
<dbReference type="Gene3D" id="3.40.50.20">
    <property type="match status" value="2"/>
</dbReference>
<dbReference type="Gene3D" id="3.30.1490.20">
    <property type="entry name" value="ATP-grasp fold, A domain"/>
    <property type="match status" value="1"/>
</dbReference>
<dbReference type="Gene3D" id="3.30.470.20">
    <property type="entry name" value="ATP-grasp fold, B domain"/>
    <property type="match status" value="2"/>
</dbReference>
<dbReference type="Gene3D" id="1.10.1030.10">
    <property type="entry name" value="Carbamoyl-phosphate synthetase, large subunit oligomerisation domain"/>
    <property type="match status" value="1"/>
</dbReference>
<dbReference type="Gene3D" id="3.40.50.1380">
    <property type="entry name" value="Methylglyoxal synthase-like domain"/>
    <property type="match status" value="1"/>
</dbReference>
<dbReference type="HAMAP" id="MF_01210_A">
    <property type="entry name" value="CPSase_L_chain_A"/>
    <property type="match status" value="1"/>
</dbReference>
<dbReference type="HAMAP" id="MF_01210_B">
    <property type="entry name" value="CPSase_L_chain_B"/>
    <property type="match status" value="1"/>
</dbReference>
<dbReference type="InterPro" id="IPR011761">
    <property type="entry name" value="ATP-grasp"/>
</dbReference>
<dbReference type="InterPro" id="IPR013815">
    <property type="entry name" value="ATP_grasp_subdomain_1"/>
</dbReference>
<dbReference type="InterPro" id="IPR006275">
    <property type="entry name" value="CarbamoylP_synth_lsu"/>
</dbReference>
<dbReference type="InterPro" id="IPR005480">
    <property type="entry name" value="CarbamoylP_synth_lsu_oligo"/>
</dbReference>
<dbReference type="InterPro" id="IPR036897">
    <property type="entry name" value="CarbamoylP_synth_lsu_oligo_sf"/>
</dbReference>
<dbReference type="InterPro" id="IPR005479">
    <property type="entry name" value="CbamoylP_synth_lsu-like_ATP-bd"/>
</dbReference>
<dbReference type="InterPro" id="IPR005483">
    <property type="entry name" value="CbamoylP_synth_lsu_CPSase_dom"/>
</dbReference>
<dbReference type="InterPro" id="IPR011607">
    <property type="entry name" value="MGS-like_dom"/>
</dbReference>
<dbReference type="InterPro" id="IPR036914">
    <property type="entry name" value="MGS-like_dom_sf"/>
</dbReference>
<dbReference type="InterPro" id="IPR033937">
    <property type="entry name" value="MGS_CPS_CarB"/>
</dbReference>
<dbReference type="InterPro" id="IPR016185">
    <property type="entry name" value="PreATP-grasp_dom_sf"/>
</dbReference>
<dbReference type="NCBIfam" id="TIGR01369">
    <property type="entry name" value="CPSaseII_lrg"/>
    <property type="match status" value="1"/>
</dbReference>
<dbReference type="NCBIfam" id="NF003671">
    <property type="entry name" value="PRK05294.1"/>
    <property type="match status" value="1"/>
</dbReference>
<dbReference type="NCBIfam" id="NF009455">
    <property type="entry name" value="PRK12815.1"/>
    <property type="match status" value="1"/>
</dbReference>
<dbReference type="PANTHER" id="PTHR11405:SF53">
    <property type="entry name" value="CARBAMOYL-PHOSPHATE SYNTHASE [AMMONIA], MITOCHONDRIAL"/>
    <property type="match status" value="1"/>
</dbReference>
<dbReference type="PANTHER" id="PTHR11405">
    <property type="entry name" value="CARBAMOYLTRANSFERASE FAMILY MEMBER"/>
    <property type="match status" value="1"/>
</dbReference>
<dbReference type="Pfam" id="PF02786">
    <property type="entry name" value="CPSase_L_D2"/>
    <property type="match status" value="2"/>
</dbReference>
<dbReference type="Pfam" id="PF02787">
    <property type="entry name" value="CPSase_L_D3"/>
    <property type="match status" value="1"/>
</dbReference>
<dbReference type="Pfam" id="PF02142">
    <property type="entry name" value="MGS"/>
    <property type="match status" value="1"/>
</dbReference>
<dbReference type="PRINTS" id="PR00098">
    <property type="entry name" value="CPSASE"/>
</dbReference>
<dbReference type="SMART" id="SM01096">
    <property type="entry name" value="CPSase_L_D3"/>
    <property type="match status" value="1"/>
</dbReference>
<dbReference type="SMART" id="SM00851">
    <property type="entry name" value="MGS"/>
    <property type="match status" value="1"/>
</dbReference>
<dbReference type="SUPFAM" id="SSF48108">
    <property type="entry name" value="Carbamoyl phosphate synthetase, large subunit connection domain"/>
    <property type="match status" value="1"/>
</dbReference>
<dbReference type="SUPFAM" id="SSF56059">
    <property type="entry name" value="Glutathione synthetase ATP-binding domain-like"/>
    <property type="match status" value="2"/>
</dbReference>
<dbReference type="SUPFAM" id="SSF52335">
    <property type="entry name" value="Methylglyoxal synthase-like"/>
    <property type="match status" value="1"/>
</dbReference>
<dbReference type="SUPFAM" id="SSF52440">
    <property type="entry name" value="PreATP-grasp domain"/>
    <property type="match status" value="2"/>
</dbReference>
<dbReference type="PROSITE" id="PS50975">
    <property type="entry name" value="ATP_GRASP"/>
    <property type="match status" value="2"/>
</dbReference>
<dbReference type="PROSITE" id="PS00866">
    <property type="entry name" value="CPSASE_1"/>
    <property type="match status" value="2"/>
</dbReference>
<dbReference type="PROSITE" id="PS00867">
    <property type="entry name" value="CPSASE_2"/>
    <property type="match status" value="2"/>
</dbReference>
<dbReference type="PROSITE" id="PS51855">
    <property type="entry name" value="MGS"/>
    <property type="match status" value="1"/>
</dbReference>
<sequence length="1069" mass="119456">MPLNKDIKKVLVVGSGPIVIGQAAEFDYSGTQACEALKSEGIEVVLINSNPATIMTDKEVADKVYLEPLTLEFIEKVIVKERPDSLLAGMGGQTGLNLAVELHDSGILEKYDVKVIGTSIESIKEGEDRELFRDMMNRIGEPVIKSEIVTDLQSGIDFANKIGYPVIVRPAYTLGGSGGGIADDEEELRIILESGLQLSTIGQVLLEKSVKGWKEIEYEVMRDSYGNCITVCNMENIDPVGIHTGDSIVVAPSQTLSDKEYQMLRTASINIINSVGIEGGCNVQFSLNPNTFEYAVIEINPRVSRSSALASKATGYPIAKLAAKIALGYGLDEIKNAVTQKTYACFEPTLDYVVVKIPKWPFDKFFGADRQLGTKMMATGEIMAIGANFEQAFLKGIRSLEIGKYSLDHKKFKEHSMSELKDLVMKPDDERIFALAEMLRRDYMIERINKITGIDKFFLEKIKWIVEEEQRLKLSKIEDLDKEWLQNLKKKGFSDKAIADMLKVSPEDIYRLRDIWSIKPSYKMVDTCGGEFEALSPYYYSTYEQYDEVEVSNRRKVIVIGSGPIRIGQGIEFDYASVHCVKALKKLDIETIIVNNNPETVSTDFDISDKLYFEPLTEEDVLNIIEKENPYGVILQFGGQTAIKLANFLKEKNIKTLGTTADQIDMAEDREKFDELLERLDISRPKGKGIWSVEEGLEEAERLGFPVLVRPSYVIGGQGMEITHDEEELIFYLTNAFVKDKKNPILIDKYLMGREIEVDAISDGENILIPGIMEHLERAGVHSGDSVTMYPSQNVCDEIKGKILEYTKKLALAIGIKGMINIQFIEFEGNLYVIEVNPRASRTVPYISKVSKVPIVDIATQVMMGAKLNDLGYGVDIYKEPELVSVKVPVFSTQKLPNVEVCLGPEMRSTGEVLGVGRNLKEALYKGFVGANMYPSKEKGKILATINKHNKAEFLPIAKDLAKVGYKFIATTGTCKLLREEGIDAEEVRKIDEEKPNILDIVKNREVDLVVNTPTKGNDSKRDGFLIRRAAVERNLGVITALDTLRAIADVELEEFDKNKDLEVFDITK</sequence>
<gene>
    <name evidence="1" type="primary">carB</name>
    <name type="ordered locus">CLL_A0071</name>
</gene>
<comment type="function">
    <text evidence="1">Large subunit of the glutamine-dependent carbamoyl phosphate synthetase (CPSase). CPSase catalyzes the formation of carbamoyl phosphate from the ammonia moiety of glutamine, carbonate, and phosphate donated by ATP, constituting the first step of 2 biosynthetic pathways, one leading to arginine and/or urea and the other to pyrimidine nucleotides. The large subunit (synthetase) binds the substrates ammonia (free or transferred from glutamine from the small subunit), hydrogencarbonate and ATP and carries out an ATP-coupled ligase reaction, activating hydrogencarbonate by forming carboxy phosphate which reacts with ammonia to form carbamoyl phosphate.</text>
</comment>
<comment type="catalytic activity">
    <reaction evidence="1">
        <text>hydrogencarbonate + L-glutamine + 2 ATP + H2O = carbamoyl phosphate + L-glutamate + 2 ADP + phosphate + 2 H(+)</text>
        <dbReference type="Rhea" id="RHEA:18633"/>
        <dbReference type="ChEBI" id="CHEBI:15377"/>
        <dbReference type="ChEBI" id="CHEBI:15378"/>
        <dbReference type="ChEBI" id="CHEBI:17544"/>
        <dbReference type="ChEBI" id="CHEBI:29985"/>
        <dbReference type="ChEBI" id="CHEBI:30616"/>
        <dbReference type="ChEBI" id="CHEBI:43474"/>
        <dbReference type="ChEBI" id="CHEBI:58228"/>
        <dbReference type="ChEBI" id="CHEBI:58359"/>
        <dbReference type="ChEBI" id="CHEBI:456216"/>
        <dbReference type="EC" id="6.3.5.5"/>
    </reaction>
</comment>
<comment type="catalytic activity">
    <molecule>Carbamoyl phosphate synthase large chain</molecule>
    <reaction evidence="1">
        <text>hydrogencarbonate + NH4(+) + 2 ATP = carbamoyl phosphate + 2 ADP + phosphate + 2 H(+)</text>
        <dbReference type="Rhea" id="RHEA:18029"/>
        <dbReference type="ChEBI" id="CHEBI:15378"/>
        <dbReference type="ChEBI" id="CHEBI:17544"/>
        <dbReference type="ChEBI" id="CHEBI:28938"/>
        <dbReference type="ChEBI" id="CHEBI:30616"/>
        <dbReference type="ChEBI" id="CHEBI:43474"/>
        <dbReference type="ChEBI" id="CHEBI:58228"/>
        <dbReference type="ChEBI" id="CHEBI:456216"/>
        <dbReference type="EC" id="6.3.4.16"/>
    </reaction>
</comment>
<comment type="cofactor">
    <cofactor evidence="1">
        <name>Mg(2+)</name>
        <dbReference type="ChEBI" id="CHEBI:18420"/>
    </cofactor>
    <cofactor evidence="1">
        <name>Mn(2+)</name>
        <dbReference type="ChEBI" id="CHEBI:29035"/>
    </cofactor>
    <text evidence="1">Binds 4 Mg(2+) or Mn(2+) ions per subunit.</text>
</comment>
<comment type="pathway">
    <text evidence="1">Amino-acid biosynthesis; L-arginine biosynthesis; carbamoyl phosphate from bicarbonate: step 1/1.</text>
</comment>
<comment type="pathway">
    <text evidence="1">Pyrimidine metabolism; UMP biosynthesis via de novo pathway; (S)-dihydroorotate from bicarbonate: step 1/3.</text>
</comment>
<comment type="subunit">
    <text evidence="1">Composed of two chains; the small (or glutamine) chain promotes the hydrolysis of glutamine to ammonia, which is used by the large (or ammonia) chain to synthesize carbamoyl phosphate. Tetramer of heterodimers (alpha,beta)4.</text>
</comment>
<comment type="domain">
    <text evidence="1">The large subunit is composed of 2 ATP-grasp domains that are involved in binding the 2 ATP molecules needed for carbamoyl phosphate synthesis. The N-terminal ATP-grasp domain (referred to as the carboxyphosphate synthetic component) catalyzes the ATP-dependent phosphorylation of hydrogencarbonate to carboxyphosphate and the subsequent nucleophilic attack by ammonia to form a carbamate intermediate. The C-terminal ATP-grasp domain (referred to as the carbamoyl phosphate synthetic component) then catalyzes the phosphorylation of carbamate with the second ATP to form the end product carbamoyl phosphate. The reactive and unstable enzyme intermediates are sequentially channeled from one active site to the next through the interior of the protein over a distance of at least 96 A.</text>
</comment>
<comment type="similarity">
    <text evidence="1">Belongs to the CarB family.</text>
</comment>
<reference key="1">
    <citation type="submission" date="2008-04" db="EMBL/GenBank/DDBJ databases">
        <title>Complete sequence of Clostridium botulinum strain Eklund.</title>
        <authorList>
            <person name="Brinkac L.M."/>
            <person name="Brown J.L."/>
            <person name="Bruce D."/>
            <person name="Detter C."/>
            <person name="Munk C."/>
            <person name="Smith L.A."/>
            <person name="Smith T.J."/>
            <person name="Sutton G."/>
            <person name="Brettin T.S."/>
        </authorList>
    </citation>
    <scope>NUCLEOTIDE SEQUENCE [LARGE SCALE GENOMIC DNA]</scope>
    <source>
        <strain>Eklund 17B / Type B</strain>
    </source>
</reference>
<protein>
    <recommendedName>
        <fullName evidence="1">Carbamoyl phosphate synthase large chain</fullName>
        <ecNumber evidence="1">6.3.4.16</ecNumber>
        <ecNumber evidence="1">6.3.5.5</ecNumber>
    </recommendedName>
    <alternativeName>
        <fullName evidence="1">Carbamoyl phosphate synthetase ammonia chain</fullName>
    </alternativeName>
</protein>
<proteinExistence type="inferred from homology"/>
<organism>
    <name type="scientific">Clostridium botulinum (strain Eklund 17B / Type B)</name>
    <dbReference type="NCBI Taxonomy" id="935198"/>
    <lineage>
        <taxon>Bacteria</taxon>
        <taxon>Bacillati</taxon>
        <taxon>Bacillota</taxon>
        <taxon>Clostridia</taxon>
        <taxon>Eubacteriales</taxon>
        <taxon>Clostridiaceae</taxon>
        <taxon>Clostridium</taxon>
    </lineage>
</organism>
<evidence type="ECO:0000255" key="1">
    <source>
        <dbReference type="HAMAP-Rule" id="MF_01210"/>
    </source>
</evidence>
<keyword id="KW-0028">Amino-acid biosynthesis</keyword>
<keyword id="KW-0055">Arginine biosynthesis</keyword>
<keyword id="KW-0067">ATP-binding</keyword>
<keyword id="KW-0436">Ligase</keyword>
<keyword id="KW-0460">Magnesium</keyword>
<keyword id="KW-0464">Manganese</keyword>
<keyword id="KW-0479">Metal-binding</keyword>
<keyword id="KW-0547">Nucleotide-binding</keyword>
<keyword id="KW-0665">Pyrimidine biosynthesis</keyword>
<keyword id="KW-0677">Repeat</keyword>
<accession>B2THH3</accession>
<feature type="chain" id="PRO_1000138887" description="Carbamoyl phosphate synthase large chain">
    <location>
        <begin position="1"/>
        <end position="1069"/>
    </location>
</feature>
<feature type="domain" description="ATP-grasp 1" evidence="1">
    <location>
        <begin position="133"/>
        <end position="327"/>
    </location>
</feature>
<feature type="domain" description="ATP-grasp 2" evidence="1">
    <location>
        <begin position="674"/>
        <end position="864"/>
    </location>
</feature>
<feature type="domain" description="MGS-like" evidence="1">
    <location>
        <begin position="932"/>
        <end position="1069"/>
    </location>
</feature>
<feature type="region of interest" description="Carboxyphosphate synthetic domain" evidence="1">
    <location>
        <begin position="1"/>
        <end position="401"/>
    </location>
</feature>
<feature type="region of interest" description="Oligomerization domain" evidence="1">
    <location>
        <begin position="402"/>
        <end position="549"/>
    </location>
</feature>
<feature type="region of interest" description="Carbamoyl phosphate synthetic domain" evidence="1">
    <location>
        <begin position="550"/>
        <end position="932"/>
    </location>
</feature>
<feature type="region of interest" description="Allosteric domain" evidence="1">
    <location>
        <begin position="933"/>
        <end position="1069"/>
    </location>
</feature>
<feature type="binding site" evidence="1">
    <location>
        <position position="129"/>
    </location>
    <ligand>
        <name>ATP</name>
        <dbReference type="ChEBI" id="CHEBI:30616"/>
        <label>1</label>
    </ligand>
</feature>
<feature type="binding site" evidence="1">
    <location>
        <position position="169"/>
    </location>
    <ligand>
        <name>ATP</name>
        <dbReference type="ChEBI" id="CHEBI:30616"/>
        <label>1</label>
    </ligand>
</feature>
<feature type="binding site" evidence="1">
    <location>
        <position position="175"/>
    </location>
    <ligand>
        <name>ATP</name>
        <dbReference type="ChEBI" id="CHEBI:30616"/>
        <label>1</label>
    </ligand>
</feature>
<feature type="binding site" evidence="1">
    <location>
        <position position="176"/>
    </location>
    <ligand>
        <name>ATP</name>
        <dbReference type="ChEBI" id="CHEBI:30616"/>
        <label>1</label>
    </ligand>
</feature>
<feature type="binding site" evidence="1">
    <location>
        <position position="208"/>
    </location>
    <ligand>
        <name>ATP</name>
        <dbReference type="ChEBI" id="CHEBI:30616"/>
        <label>1</label>
    </ligand>
</feature>
<feature type="binding site" evidence="1">
    <location>
        <position position="210"/>
    </location>
    <ligand>
        <name>ATP</name>
        <dbReference type="ChEBI" id="CHEBI:30616"/>
        <label>1</label>
    </ligand>
</feature>
<feature type="binding site" evidence="1">
    <location>
        <position position="215"/>
    </location>
    <ligand>
        <name>ATP</name>
        <dbReference type="ChEBI" id="CHEBI:30616"/>
        <label>1</label>
    </ligand>
</feature>
<feature type="binding site" evidence="1">
    <location>
        <position position="241"/>
    </location>
    <ligand>
        <name>ATP</name>
        <dbReference type="ChEBI" id="CHEBI:30616"/>
        <label>1</label>
    </ligand>
</feature>
<feature type="binding site" evidence="1">
    <location>
        <position position="242"/>
    </location>
    <ligand>
        <name>ATP</name>
        <dbReference type="ChEBI" id="CHEBI:30616"/>
        <label>1</label>
    </ligand>
</feature>
<feature type="binding site" evidence="1">
    <location>
        <position position="243"/>
    </location>
    <ligand>
        <name>ATP</name>
        <dbReference type="ChEBI" id="CHEBI:30616"/>
        <label>1</label>
    </ligand>
</feature>
<feature type="binding site" evidence="1">
    <location>
        <position position="284"/>
    </location>
    <ligand>
        <name>ATP</name>
        <dbReference type="ChEBI" id="CHEBI:30616"/>
        <label>1</label>
    </ligand>
</feature>
<feature type="binding site" evidence="1">
    <location>
        <position position="284"/>
    </location>
    <ligand>
        <name>Mg(2+)</name>
        <dbReference type="ChEBI" id="CHEBI:18420"/>
        <label>1</label>
    </ligand>
</feature>
<feature type="binding site" evidence="1">
    <location>
        <position position="284"/>
    </location>
    <ligand>
        <name>Mn(2+)</name>
        <dbReference type="ChEBI" id="CHEBI:29035"/>
        <label>1</label>
    </ligand>
</feature>
<feature type="binding site" evidence="1">
    <location>
        <position position="298"/>
    </location>
    <ligand>
        <name>ATP</name>
        <dbReference type="ChEBI" id="CHEBI:30616"/>
        <label>1</label>
    </ligand>
</feature>
<feature type="binding site" evidence="1">
    <location>
        <position position="298"/>
    </location>
    <ligand>
        <name>Mg(2+)</name>
        <dbReference type="ChEBI" id="CHEBI:18420"/>
        <label>1</label>
    </ligand>
</feature>
<feature type="binding site" evidence="1">
    <location>
        <position position="298"/>
    </location>
    <ligand>
        <name>Mg(2+)</name>
        <dbReference type="ChEBI" id="CHEBI:18420"/>
        <label>2</label>
    </ligand>
</feature>
<feature type="binding site" evidence="1">
    <location>
        <position position="298"/>
    </location>
    <ligand>
        <name>Mn(2+)</name>
        <dbReference type="ChEBI" id="CHEBI:29035"/>
        <label>1</label>
    </ligand>
</feature>
<feature type="binding site" evidence="1">
    <location>
        <position position="298"/>
    </location>
    <ligand>
        <name>Mn(2+)</name>
        <dbReference type="ChEBI" id="CHEBI:29035"/>
        <label>2</label>
    </ligand>
</feature>
<feature type="binding site" evidence="1">
    <location>
        <position position="300"/>
    </location>
    <ligand>
        <name>Mg(2+)</name>
        <dbReference type="ChEBI" id="CHEBI:18420"/>
        <label>2</label>
    </ligand>
</feature>
<feature type="binding site" evidence="1">
    <location>
        <position position="300"/>
    </location>
    <ligand>
        <name>Mn(2+)</name>
        <dbReference type="ChEBI" id="CHEBI:29035"/>
        <label>2</label>
    </ligand>
</feature>
<feature type="binding site" evidence="1">
    <location>
        <position position="710"/>
    </location>
    <ligand>
        <name>ATP</name>
        <dbReference type="ChEBI" id="CHEBI:30616"/>
        <label>2</label>
    </ligand>
</feature>
<feature type="binding site" evidence="1">
    <location>
        <position position="749"/>
    </location>
    <ligand>
        <name>ATP</name>
        <dbReference type="ChEBI" id="CHEBI:30616"/>
        <label>2</label>
    </ligand>
</feature>
<feature type="binding site" evidence="1">
    <location>
        <position position="751"/>
    </location>
    <ligand>
        <name>ATP</name>
        <dbReference type="ChEBI" id="CHEBI:30616"/>
        <label>2</label>
    </ligand>
</feature>
<feature type="binding site" evidence="1">
    <location>
        <position position="755"/>
    </location>
    <ligand>
        <name>ATP</name>
        <dbReference type="ChEBI" id="CHEBI:30616"/>
        <label>2</label>
    </ligand>
</feature>
<feature type="binding site" evidence="1">
    <location>
        <position position="780"/>
    </location>
    <ligand>
        <name>ATP</name>
        <dbReference type="ChEBI" id="CHEBI:30616"/>
        <label>2</label>
    </ligand>
</feature>
<feature type="binding site" evidence="1">
    <location>
        <position position="781"/>
    </location>
    <ligand>
        <name>ATP</name>
        <dbReference type="ChEBI" id="CHEBI:30616"/>
        <label>2</label>
    </ligand>
</feature>
<feature type="binding site" evidence="1">
    <location>
        <position position="782"/>
    </location>
    <ligand>
        <name>ATP</name>
        <dbReference type="ChEBI" id="CHEBI:30616"/>
        <label>2</label>
    </ligand>
</feature>
<feature type="binding site" evidence="1">
    <location>
        <position position="783"/>
    </location>
    <ligand>
        <name>ATP</name>
        <dbReference type="ChEBI" id="CHEBI:30616"/>
        <label>2</label>
    </ligand>
</feature>
<feature type="binding site" evidence="1">
    <location>
        <position position="823"/>
    </location>
    <ligand>
        <name>ATP</name>
        <dbReference type="ChEBI" id="CHEBI:30616"/>
        <label>2</label>
    </ligand>
</feature>
<feature type="binding site" evidence="1">
    <location>
        <position position="823"/>
    </location>
    <ligand>
        <name>Mg(2+)</name>
        <dbReference type="ChEBI" id="CHEBI:18420"/>
        <label>3</label>
    </ligand>
</feature>
<feature type="binding site" evidence="1">
    <location>
        <position position="823"/>
    </location>
    <ligand>
        <name>Mn(2+)</name>
        <dbReference type="ChEBI" id="CHEBI:29035"/>
        <label>3</label>
    </ligand>
</feature>
<feature type="binding site" evidence="1">
    <location>
        <position position="835"/>
    </location>
    <ligand>
        <name>ATP</name>
        <dbReference type="ChEBI" id="CHEBI:30616"/>
        <label>2</label>
    </ligand>
</feature>
<feature type="binding site" evidence="1">
    <location>
        <position position="835"/>
    </location>
    <ligand>
        <name>Mg(2+)</name>
        <dbReference type="ChEBI" id="CHEBI:18420"/>
        <label>3</label>
    </ligand>
</feature>
<feature type="binding site" evidence="1">
    <location>
        <position position="835"/>
    </location>
    <ligand>
        <name>Mg(2+)</name>
        <dbReference type="ChEBI" id="CHEBI:18420"/>
        <label>4</label>
    </ligand>
</feature>
<feature type="binding site" evidence="1">
    <location>
        <position position="835"/>
    </location>
    <ligand>
        <name>Mn(2+)</name>
        <dbReference type="ChEBI" id="CHEBI:29035"/>
        <label>3</label>
    </ligand>
</feature>
<feature type="binding site" evidence="1">
    <location>
        <position position="835"/>
    </location>
    <ligand>
        <name>Mn(2+)</name>
        <dbReference type="ChEBI" id="CHEBI:29035"/>
        <label>4</label>
    </ligand>
</feature>
<feature type="binding site" evidence="1">
    <location>
        <position position="837"/>
    </location>
    <ligand>
        <name>Mg(2+)</name>
        <dbReference type="ChEBI" id="CHEBI:18420"/>
        <label>4</label>
    </ligand>
</feature>
<feature type="binding site" evidence="1">
    <location>
        <position position="837"/>
    </location>
    <ligand>
        <name>Mn(2+)</name>
        <dbReference type="ChEBI" id="CHEBI:29035"/>
        <label>4</label>
    </ligand>
</feature>
<name>CARB_CLOBB</name>